<gene>
    <name evidence="1" type="primary">smpB</name>
    <name type="ordered locus">BL1180</name>
</gene>
<keyword id="KW-0963">Cytoplasm</keyword>
<keyword id="KW-1185">Reference proteome</keyword>
<keyword id="KW-0694">RNA-binding</keyword>
<name>SSRP_BIFLO</name>
<feature type="chain" id="PRO_0000102911" description="SsrA-binding protein">
    <location>
        <begin position="1"/>
        <end position="158"/>
    </location>
</feature>
<proteinExistence type="inferred from homology"/>
<dbReference type="EMBL" id="AE014295">
    <property type="protein sequence ID" value="AAN24985.1"/>
    <property type="status" value="ALT_INIT"/>
    <property type="molecule type" value="Genomic_DNA"/>
</dbReference>
<dbReference type="RefSeq" id="NP_696349.1">
    <property type="nucleotide sequence ID" value="NC_004307.2"/>
</dbReference>
<dbReference type="RefSeq" id="WP_007051292.1">
    <property type="nucleotide sequence ID" value="NC_004307.2"/>
</dbReference>
<dbReference type="SMR" id="Q8G540"/>
<dbReference type="STRING" id="206672.BL1180"/>
<dbReference type="EnsemblBacteria" id="AAN24985">
    <property type="protein sequence ID" value="AAN24985"/>
    <property type="gene ID" value="BL1180"/>
</dbReference>
<dbReference type="GeneID" id="69577672"/>
<dbReference type="KEGG" id="blo:BL1180"/>
<dbReference type="PATRIC" id="fig|206672.9.peg.892"/>
<dbReference type="HOGENOM" id="CLU_108953_2_1_11"/>
<dbReference type="OrthoDB" id="9805462at2"/>
<dbReference type="Proteomes" id="UP000000439">
    <property type="component" value="Chromosome"/>
</dbReference>
<dbReference type="GO" id="GO:0005829">
    <property type="term" value="C:cytosol"/>
    <property type="evidence" value="ECO:0007669"/>
    <property type="project" value="TreeGrafter"/>
</dbReference>
<dbReference type="GO" id="GO:0003723">
    <property type="term" value="F:RNA binding"/>
    <property type="evidence" value="ECO:0007669"/>
    <property type="project" value="UniProtKB-UniRule"/>
</dbReference>
<dbReference type="GO" id="GO:0070929">
    <property type="term" value="P:trans-translation"/>
    <property type="evidence" value="ECO:0007669"/>
    <property type="project" value="UniProtKB-UniRule"/>
</dbReference>
<dbReference type="CDD" id="cd09294">
    <property type="entry name" value="SmpB"/>
    <property type="match status" value="1"/>
</dbReference>
<dbReference type="Gene3D" id="2.40.280.10">
    <property type="match status" value="1"/>
</dbReference>
<dbReference type="HAMAP" id="MF_00023">
    <property type="entry name" value="SmpB"/>
    <property type="match status" value="1"/>
</dbReference>
<dbReference type="InterPro" id="IPR023620">
    <property type="entry name" value="SmpB"/>
</dbReference>
<dbReference type="InterPro" id="IPR000037">
    <property type="entry name" value="SsrA-bd_prot"/>
</dbReference>
<dbReference type="InterPro" id="IPR020081">
    <property type="entry name" value="SsrA-bd_prot_CS"/>
</dbReference>
<dbReference type="NCBIfam" id="NF003843">
    <property type="entry name" value="PRK05422.1"/>
    <property type="match status" value="1"/>
</dbReference>
<dbReference type="NCBIfam" id="TIGR00086">
    <property type="entry name" value="smpB"/>
    <property type="match status" value="1"/>
</dbReference>
<dbReference type="PANTHER" id="PTHR30308:SF2">
    <property type="entry name" value="SSRA-BINDING PROTEIN"/>
    <property type="match status" value="1"/>
</dbReference>
<dbReference type="PANTHER" id="PTHR30308">
    <property type="entry name" value="TMRNA-BINDING COMPONENT OF TRANS-TRANSLATION TAGGING COMPLEX"/>
    <property type="match status" value="1"/>
</dbReference>
<dbReference type="Pfam" id="PF01668">
    <property type="entry name" value="SmpB"/>
    <property type="match status" value="1"/>
</dbReference>
<dbReference type="SUPFAM" id="SSF74982">
    <property type="entry name" value="Small protein B (SmpB)"/>
    <property type="match status" value="1"/>
</dbReference>
<dbReference type="PROSITE" id="PS01317">
    <property type="entry name" value="SSRP"/>
    <property type="match status" value="1"/>
</dbReference>
<reference key="1">
    <citation type="journal article" date="2002" name="Proc. Natl. Acad. Sci. U.S.A.">
        <title>The genome sequence of Bifidobacterium longum reflects its adaptation to the human gastrointestinal tract.</title>
        <authorList>
            <person name="Schell M.A."/>
            <person name="Karmirantzou M."/>
            <person name="Snel B."/>
            <person name="Vilanova D."/>
            <person name="Berger B."/>
            <person name="Pessi G."/>
            <person name="Zwahlen M.-C."/>
            <person name="Desiere F."/>
            <person name="Bork P."/>
            <person name="Delley M."/>
            <person name="Pridmore R.D."/>
            <person name="Arigoni F."/>
        </authorList>
    </citation>
    <scope>NUCLEOTIDE SEQUENCE [LARGE SCALE GENOMIC DNA]</scope>
    <source>
        <strain>NCC 2705</strain>
    </source>
</reference>
<accession>Q8G540</accession>
<evidence type="ECO:0000255" key="1">
    <source>
        <dbReference type="HAMAP-Rule" id="MF_00023"/>
    </source>
</evidence>
<evidence type="ECO:0000305" key="2"/>
<protein>
    <recommendedName>
        <fullName evidence="1">SsrA-binding protein</fullName>
    </recommendedName>
    <alternativeName>
        <fullName evidence="1">Small protein B</fullName>
    </alternativeName>
</protein>
<comment type="function">
    <text evidence="1">Required for rescue of stalled ribosomes mediated by trans-translation. Binds to transfer-messenger RNA (tmRNA), required for stable association of tmRNA with ribosomes. tmRNA and SmpB together mimic tRNA shape, replacing the anticodon stem-loop with SmpB. tmRNA is encoded by the ssrA gene; the 2 termini fold to resemble tRNA(Ala) and it encodes a 'tag peptide', a short internal open reading frame. During trans-translation Ala-aminoacylated tmRNA acts like a tRNA, entering the A-site of stalled ribosomes, displacing the stalled mRNA. The ribosome then switches to translate the ORF on the tmRNA; the nascent peptide is terminated with the 'tag peptide' encoded by the tmRNA and targeted for degradation. The ribosome is freed to recommence translation, which seems to be the essential function of trans-translation.</text>
</comment>
<comment type="subcellular location">
    <subcellularLocation>
        <location evidence="1">Cytoplasm</location>
    </subcellularLocation>
    <text evidence="1">The tmRNA-SmpB complex associates with stalled 70S ribosomes.</text>
</comment>
<comment type="similarity">
    <text evidence="1">Belongs to the SmpB family.</text>
</comment>
<comment type="sequence caution" evidence="2">
    <conflict type="erroneous initiation">
        <sequence resource="EMBL-CDS" id="AAN24985"/>
    </conflict>
    <text>Extended N-terminus.</text>
</comment>
<sequence>MPKETGEKLIVQNKKARHDYAIEDKYEAGLALTGTEVKSLREGRASLSEAFISIDRRGEMWLEGANIPEYLNGTWNNHAPKRKRKLLLHRLQITKLARGIEAKGYTIVPLSLYFKDGRVKAEIALARGKKEFDKRQALREEQDKREALRAMRYANMRH</sequence>
<organism>
    <name type="scientific">Bifidobacterium longum (strain NCC 2705)</name>
    <dbReference type="NCBI Taxonomy" id="206672"/>
    <lineage>
        <taxon>Bacteria</taxon>
        <taxon>Bacillati</taxon>
        <taxon>Actinomycetota</taxon>
        <taxon>Actinomycetes</taxon>
        <taxon>Bifidobacteriales</taxon>
        <taxon>Bifidobacteriaceae</taxon>
        <taxon>Bifidobacterium</taxon>
    </lineage>
</organism>